<dbReference type="EC" id="6.3.4.3" evidence="1"/>
<dbReference type="EMBL" id="CP000031">
    <property type="protein sequence ID" value="AAV94844.1"/>
    <property type="molecule type" value="Genomic_DNA"/>
</dbReference>
<dbReference type="EMBL" id="CP000031">
    <property type="protein sequence ID" value="AAV96338.1"/>
    <property type="molecule type" value="Genomic_DNA"/>
</dbReference>
<dbReference type="RefSeq" id="WP_011047294.1">
    <property type="nucleotide sequence ID" value="NC_003911.12"/>
</dbReference>
<dbReference type="SMR" id="Q5LNV0"/>
<dbReference type="STRING" id="246200.SPO1557"/>
<dbReference type="PaxDb" id="246200-SPO1557"/>
<dbReference type="KEGG" id="sil:SPO1557"/>
<dbReference type="KEGG" id="sil:SPO3103"/>
<dbReference type="eggNOG" id="COG2759">
    <property type="taxonomic scope" value="Bacteria"/>
</dbReference>
<dbReference type="HOGENOM" id="CLU_003601_3_3_5"/>
<dbReference type="OrthoDB" id="9761733at2"/>
<dbReference type="UniPathway" id="UPA00193"/>
<dbReference type="Proteomes" id="UP000001023">
    <property type="component" value="Chromosome"/>
</dbReference>
<dbReference type="GO" id="GO:0005524">
    <property type="term" value="F:ATP binding"/>
    <property type="evidence" value="ECO:0007669"/>
    <property type="project" value="UniProtKB-UniRule"/>
</dbReference>
<dbReference type="GO" id="GO:0004329">
    <property type="term" value="F:formate-tetrahydrofolate ligase activity"/>
    <property type="evidence" value="ECO:0007669"/>
    <property type="project" value="UniProtKB-UniRule"/>
</dbReference>
<dbReference type="GO" id="GO:0035999">
    <property type="term" value="P:tetrahydrofolate interconversion"/>
    <property type="evidence" value="ECO:0007669"/>
    <property type="project" value="UniProtKB-UniRule"/>
</dbReference>
<dbReference type="CDD" id="cd00477">
    <property type="entry name" value="FTHFS"/>
    <property type="match status" value="1"/>
</dbReference>
<dbReference type="FunFam" id="3.30.1510.10:FF:000001">
    <property type="entry name" value="Formate--tetrahydrofolate ligase"/>
    <property type="match status" value="1"/>
</dbReference>
<dbReference type="FunFam" id="3.10.410.10:FF:000001">
    <property type="entry name" value="Putative formate--tetrahydrofolate ligase"/>
    <property type="match status" value="1"/>
</dbReference>
<dbReference type="Gene3D" id="3.30.1510.10">
    <property type="entry name" value="Domain 2, N(10)-formyltetrahydrofolate synthetase"/>
    <property type="match status" value="1"/>
</dbReference>
<dbReference type="Gene3D" id="3.10.410.10">
    <property type="entry name" value="Formyltetrahydrofolate synthetase, domain 3"/>
    <property type="match status" value="1"/>
</dbReference>
<dbReference type="Gene3D" id="3.40.50.300">
    <property type="entry name" value="P-loop containing nucleotide triphosphate hydrolases"/>
    <property type="match status" value="1"/>
</dbReference>
<dbReference type="HAMAP" id="MF_01543">
    <property type="entry name" value="FTHFS"/>
    <property type="match status" value="1"/>
</dbReference>
<dbReference type="InterPro" id="IPR000559">
    <property type="entry name" value="Formate_THF_ligase"/>
</dbReference>
<dbReference type="InterPro" id="IPR020628">
    <property type="entry name" value="Formate_THF_ligase_CS"/>
</dbReference>
<dbReference type="InterPro" id="IPR027417">
    <property type="entry name" value="P-loop_NTPase"/>
</dbReference>
<dbReference type="NCBIfam" id="NF010030">
    <property type="entry name" value="PRK13505.1"/>
    <property type="match status" value="1"/>
</dbReference>
<dbReference type="Pfam" id="PF01268">
    <property type="entry name" value="FTHFS"/>
    <property type="match status" value="1"/>
</dbReference>
<dbReference type="SUPFAM" id="SSF52540">
    <property type="entry name" value="P-loop containing nucleoside triphosphate hydrolases"/>
    <property type="match status" value="1"/>
</dbReference>
<dbReference type="PROSITE" id="PS00721">
    <property type="entry name" value="FTHFS_1"/>
    <property type="match status" value="1"/>
</dbReference>
<dbReference type="PROSITE" id="PS00722">
    <property type="entry name" value="FTHFS_2"/>
    <property type="match status" value="1"/>
</dbReference>
<feature type="chain" id="PRO_0000199374" description="Formate--tetrahydrofolate ligase">
    <location>
        <begin position="1"/>
        <end position="558"/>
    </location>
</feature>
<feature type="binding site" evidence="1">
    <location>
        <begin position="67"/>
        <end position="74"/>
    </location>
    <ligand>
        <name>ATP</name>
        <dbReference type="ChEBI" id="CHEBI:30616"/>
    </ligand>
</feature>
<proteinExistence type="inferred from homology"/>
<organism>
    <name type="scientific">Ruegeria pomeroyi (strain ATCC 700808 / DSM 15171 / DSS-3)</name>
    <name type="common">Silicibacter pomeroyi</name>
    <dbReference type="NCBI Taxonomy" id="246200"/>
    <lineage>
        <taxon>Bacteria</taxon>
        <taxon>Pseudomonadati</taxon>
        <taxon>Pseudomonadota</taxon>
        <taxon>Alphaproteobacteria</taxon>
        <taxon>Rhodobacterales</taxon>
        <taxon>Roseobacteraceae</taxon>
        <taxon>Ruegeria</taxon>
    </lineage>
</organism>
<reference key="1">
    <citation type="journal article" date="2004" name="Nature">
        <title>Genome sequence of Silicibacter pomeroyi reveals adaptations to the marine environment.</title>
        <authorList>
            <person name="Moran M.A."/>
            <person name="Buchan A."/>
            <person name="Gonzalez J.M."/>
            <person name="Heidelberg J.F."/>
            <person name="Whitman W.B."/>
            <person name="Kiene R.P."/>
            <person name="Henriksen J.R."/>
            <person name="King G.M."/>
            <person name="Belas R."/>
            <person name="Fuqua C."/>
            <person name="Brinkac L.M."/>
            <person name="Lewis M."/>
            <person name="Johri S."/>
            <person name="Weaver B."/>
            <person name="Pai G."/>
            <person name="Eisen J.A."/>
            <person name="Rahe E."/>
            <person name="Sheldon W.M."/>
            <person name="Ye W."/>
            <person name="Miller T.R."/>
            <person name="Carlton J."/>
            <person name="Rasko D.A."/>
            <person name="Paulsen I.T."/>
            <person name="Ren Q."/>
            <person name="Daugherty S.C."/>
            <person name="DeBoy R.T."/>
            <person name="Dodson R.J."/>
            <person name="Durkin A.S."/>
            <person name="Madupu R."/>
            <person name="Nelson W.C."/>
            <person name="Sullivan S.A."/>
            <person name="Rosovitz M.J."/>
            <person name="Haft D.H."/>
            <person name="Selengut J."/>
            <person name="Ward N."/>
        </authorList>
    </citation>
    <scope>NUCLEOTIDE SEQUENCE [LARGE SCALE GENOMIC DNA]</scope>
    <source>
        <strain>ATCC 700808 / DSM 15171 / DSS-3</strain>
    </source>
</reference>
<reference key="2">
    <citation type="journal article" date="2014" name="Stand. Genomic Sci.">
        <title>An updated genome annotation for the model marine bacterium Ruegeria pomeroyi DSS-3.</title>
        <authorList>
            <person name="Rivers A.R."/>
            <person name="Smith C.B."/>
            <person name="Moran M.A."/>
        </authorList>
    </citation>
    <scope>GENOME REANNOTATION</scope>
    <source>
        <strain>ATCC 700808 / DSM 15171 / DSS-3</strain>
    </source>
</reference>
<sequence length="558" mass="60044">MAYKSDIEIAREARKLPILEIGAKLGIAADELLPYGHDKAKVSQGFIDSVQDRADGRLILVTAINPTPAGEGKTTTTVGLGDGLNRIGKNAMICIREASLGPNFGMKGGAAGGGYAQIVPMEEMNLHFTGDFHAITSAHSLLSAMIDNHIYWGNEADIDTRRVVWRRVVDMNDRALRQITCSLGGVSNGFPREAGFDITVASEVMAILCLARDLKDLEKRLGDIIVAYRRDKSPVYCRDIKAEGAMTVLLKDAMQPNLVQTLENNPAFVHGGPFANIAHGCNSVIATKTALKVADYVVTEAGFGADLGAEKFMNIKCRKAGIAPSAVVLVATVRAMKMNGGVAKGDLGAENVAAVNKGCANLGRHIENVKSFGVPVVVAINHFVTDTDAEVQAVRDYCANHGVEAVLSRHWELGSEGSEALARKVVELAESGKANFAPIYPDDMSLFEKIETIAKRIYRADEVLADAKIRNQLKEWEEAGYRNLPVCMAKTQYSFTTDPNRRGAPTGHSVPVREVRLSAGAGFIVVVCGEIMTMPGLPRKPAAETIRLNDAGQIEGLF</sequence>
<name>FTHS_RUEPO</name>
<keyword id="KW-0067">ATP-binding</keyword>
<keyword id="KW-0436">Ligase</keyword>
<keyword id="KW-0547">Nucleotide-binding</keyword>
<keyword id="KW-0554">One-carbon metabolism</keyword>
<keyword id="KW-1185">Reference proteome</keyword>
<accession>Q5LNV0</accession>
<gene>
    <name evidence="1" type="primary">fhs1</name>
    <name type="synonym">fhs-1</name>
    <name type="ordered locus">SPO1557</name>
</gene>
<gene>
    <name evidence="1" type="primary">fhs2</name>
    <name type="synonym">fhs-2</name>
    <name type="ordered locus">SPO3103</name>
</gene>
<evidence type="ECO:0000255" key="1">
    <source>
        <dbReference type="HAMAP-Rule" id="MF_01543"/>
    </source>
</evidence>
<protein>
    <recommendedName>
        <fullName evidence="1">Formate--tetrahydrofolate ligase</fullName>
        <ecNumber evidence="1">6.3.4.3</ecNumber>
    </recommendedName>
    <alternativeName>
        <fullName evidence="1">Formyltetrahydrofolate synthetase</fullName>
        <shortName evidence="1">FHS</shortName>
        <shortName evidence="1">FTHFS</shortName>
    </alternativeName>
</protein>
<comment type="catalytic activity">
    <reaction evidence="1">
        <text>(6S)-5,6,7,8-tetrahydrofolate + formate + ATP = (6R)-10-formyltetrahydrofolate + ADP + phosphate</text>
        <dbReference type="Rhea" id="RHEA:20221"/>
        <dbReference type="ChEBI" id="CHEBI:15740"/>
        <dbReference type="ChEBI" id="CHEBI:30616"/>
        <dbReference type="ChEBI" id="CHEBI:43474"/>
        <dbReference type="ChEBI" id="CHEBI:57453"/>
        <dbReference type="ChEBI" id="CHEBI:195366"/>
        <dbReference type="ChEBI" id="CHEBI:456216"/>
        <dbReference type="EC" id="6.3.4.3"/>
    </reaction>
</comment>
<comment type="pathway">
    <text evidence="1">One-carbon metabolism; tetrahydrofolate interconversion.</text>
</comment>
<comment type="similarity">
    <text evidence="1">Belongs to the formate--tetrahydrofolate ligase family.</text>
</comment>